<proteinExistence type="evidence at protein level"/>
<keyword id="KW-0002">3D-structure</keyword>
<keyword id="KW-0067">ATP-binding</keyword>
<keyword id="KW-0133">Cell shape</keyword>
<keyword id="KW-0961">Cell wall biogenesis/degradation</keyword>
<keyword id="KW-0963">Cytoplasm</keyword>
<keyword id="KW-0436">Ligase</keyword>
<keyword id="KW-0460">Magnesium</keyword>
<keyword id="KW-0464">Manganese</keyword>
<keyword id="KW-0479">Metal-binding</keyword>
<keyword id="KW-0547">Nucleotide-binding</keyword>
<keyword id="KW-0573">Peptidoglycan synthesis</keyword>
<keyword id="KW-1185">Reference proteome</keyword>
<evidence type="ECO:0000250" key="1"/>
<evidence type="ECO:0000255" key="2">
    <source>
        <dbReference type="HAMAP-Rule" id="MF_00047"/>
    </source>
</evidence>
<evidence type="ECO:0007829" key="3">
    <source>
        <dbReference type="PDB" id="6LL9"/>
    </source>
</evidence>
<gene>
    <name evidence="2" type="primary">ddl</name>
    <name type="ordered locus">AHA_2404</name>
</gene>
<comment type="function">
    <text evidence="2">Cell wall formation.</text>
</comment>
<comment type="catalytic activity">
    <reaction evidence="2">
        <text>2 D-alanine + ATP = D-alanyl-D-alanine + ADP + phosphate + H(+)</text>
        <dbReference type="Rhea" id="RHEA:11224"/>
        <dbReference type="ChEBI" id="CHEBI:15378"/>
        <dbReference type="ChEBI" id="CHEBI:30616"/>
        <dbReference type="ChEBI" id="CHEBI:43474"/>
        <dbReference type="ChEBI" id="CHEBI:57416"/>
        <dbReference type="ChEBI" id="CHEBI:57822"/>
        <dbReference type="ChEBI" id="CHEBI:456216"/>
        <dbReference type="EC" id="6.3.2.4"/>
    </reaction>
</comment>
<comment type="cofactor">
    <cofactor evidence="1">
        <name>Mg(2+)</name>
        <dbReference type="ChEBI" id="CHEBI:18420"/>
    </cofactor>
    <cofactor evidence="1">
        <name>Mn(2+)</name>
        <dbReference type="ChEBI" id="CHEBI:29035"/>
    </cofactor>
    <text evidence="1">Binds 2 magnesium or manganese ions per subunit.</text>
</comment>
<comment type="pathway">
    <text evidence="2">Cell wall biogenesis; peptidoglycan biosynthesis.</text>
</comment>
<comment type="subcellular location">
    <subcellularLocation>
        <location evidence="2">Cytoplasm</location>
    </subcellularLocation>
</comment>
<comment type="similarity">
    <text evidence="2">Belongs to the D-alanine--D-alanine ligase family.</text>
</comment>
<sequence length="329" mass="36343">MKNIHVLLLCGGGGSEHEVSLRSANFLEKQLSLLPGVEVTRVEMFADRWLSADGRECKLGLDKLLSFDSVARPVDYVVPCIHGYPGETGDLQSFLELAGLPYLGCDAEASKICFNKISTKLWLSAIGIPNTPYLFLTEQNDAALSEAKAALAKWGKVFIKAASQGSSVGCYSASNEADLVKGIADAFGYSEQVLIEKAVKPRELEVAVYQYGDELVATYPGEICVPQDKFYTYEEKYSSASHTETALRAEGLTQAQADAIHEYALKAFRQLKLTHLSRIDFFLTEEGEILLNEINTFPGMTSISMFPKLLEHHGHRFADYLEQILRKAV</sequence>
<reference key="1">
    <citation type="journal article" date="2006" name="J. Bacteriol.">
        <title>Genome sequence of Aeromonas hydrophila ATCC 7966T: jack of all trades.</title>
        <authorList>
            <person name="Seshadri R."/>
            <person name="Joseph S.W."/>
            <person name="Chopra A.K."/>
            <person name="Sha J."/>
            <person name="Shaw J."/>
            <person name="Graf J."/>
            <person name="Haft D.H."/>
            <person name="Wu M."/>
            <person name="Ren Q."/>
            <person name="Rosovitz M.J."/>
            <person name="Madupu R."/>
            <person name="Tallon L."/>
            <person name="Kim M."/>
            <person name="Jin S."/>
            <person name="Vuong H."/>
            <person name="Stine O.C."/>
            <person name="Ali A."/>
            <person name="Horneman A.J."/>
            <person name="Heidelberg J.F."/>
        </authorList>
    </citation>
    <scope>NUCLEOTIDE SEQUENCE [LARGE SCALE GENOMIC DNA]</scope>
    <source>
        <strain>ATCC 7966 / DSM 30187 / BCRC 13018 / CCUG 14551 / JCM 1027 / KCTC 2358 / NCIMB 9240 / NCTC 8049</strain>
    </source>
</reference>
<name>DDL_AERHH</name>
<organism>
    <name type="scientific">Aeromonas hydrophila subsp. hydrophila (strain ATCC 7966 / DSM 30187 / BCRC 13018 / CCUG 14551 / JCM 1027 / KCTC 2358 / NCIMB 9240 / NCTC 8049)</name>
    <dbReference type="NCBI Taxonomy" id="380703"/>
    <lineage>
        <taxon>Bacteria</taxon>
        <taxon>Pseudomonadati</taxon>
        <taxon>Pseudomonadota</taxon>
        <taxon>Gammaproteobacteria</taxon>
        <taxon>Aeromonadales</taxon>
        <taxon>Aeromonadaceae</taxon>
        <taxon>Aeromonas</taxon>
    </lineage>
</organism>
<accession>A0KKW8</accession>
<protein>
    <recommendedName>
        <fullName evidence="2">D-alanine--D-alanine ligase</fullName>
        <ecNumber evidence="2">6.3.2.4</ecNumber>
    </recommendedName>
    <alternativeName>
        <fullName evidence="2">D-Ala-D-Ala ligase</fullName>
    </alternativeName>
    <alternativeName>
        <fullName evidence="2">D-alanylalanine synthetase</fullName>
    </alternativeName>
</protein>
<dbReference type="EC" id="6.3.2.4" evidence="2"/>
<dbReference type="EMBL" id="CP000462">
    <property type="protein sequence ID" value="ABK38135.1"/>
    <property type="molecule type" value="Genomic_DNA"/>
</dbReference>
<dbReference type="RefSeq" id="WP_011706238.1">
    <property type="nucleotide sequence ID" value="NC_008570.1"/>
</dbReference>
<dbReference type="RefSeq" id="YP_856919.1">
    <property type="nucleotide sequence ID" value="NC_008570.1"/>
</dbReference>
<dbReference type="PDB" id="6LL9">
    <property type="method" value="X-ray"/>
    <property type="resolution" value="2.70 A"/>
    <property type="chains" value="A/B=1-329"/>
</dbReference>
<dbReference type="PDBsum" id="6LL9"/>
<dbReference type="SMR" id="A0KKW8"/>
<dbReference type="STRING" id="380703.AHA_2404"/>
<dbReference type="EnsemblBacteria" id="ABK38135">
    <property type="protein sequence ID" value="ABK38135"/>
    <property type="gene ID" value="AHA_2404"/>
</dbReference>
<dbReference type="GeneID" id="4488463"/>
<dbReference type="KEGG" id="aha:AHA_2404"/>
<dbReference type="PATRIC" id="fig|380703.7.peg.2401"/>
<dbReference type="eggNOG" id="COG1181">
    <property type="taxonomic scope" value="Bacteria"/>
</dbReference>
<dbReference type="HOGENOM" id="CLU_039268_0_0_6"/>
<dbReference type="OrthoDB" id="9813261at2"/>
<dbReference type="UniPathway" id="UPA00219"/>
<dbReference type="Proteomes" id="UP000000756">
    <property type="component" value="Chromosome"/>
</dbReference>
<dbReference type="GO" id="GO:0005829">
    <property type="term" value="C:cytosol"/>
    <property type="evidence" value="ECO:0007669"/>
    <property type="project" value="TreeGrafter"/>
</dbReference>
<dbReference type="GO" id="GO:0005524">
    <property type="term" value="F:ATP binding"/>
    <property type="evidence" value="ECO:0007669"/>
    <property type="project" value="UniProtKB-KW"/>
</dbReference>
<dbReference type="GO" id="GO:0008716">
    <property type="term" value="F:D-alanine-D-alanine ligase activity"/>
    <property type="evidence" value="ECO:0007669"/>
    <property type="project" value="UniProtKB-UniRule"/>
</dbReference>
<dbReference type="GO" id="GO:0046872">
    <property type="term" value="F:metal ion binding"/>
    <property type="evidence" value="ECO:0007669"/>
    <property type="project" value="UniProtKB-KW"/>
</dbReference>
<dbReference type="GO" id="GO:0071555">
    <property type="term" value="P:cell wall organization"/>
    <property type="evidence" value="ECO:0007669"/>
    <property type="project" value="UniProtKB-KW"/>
</dbReference>
<dbReference type="GO" id="GO:0009252">
    <property type="term" value="P:peptidoglycan biosynthetic process"/>
    <property type="evidence" value="ECO:0007669"/>
    <property type="project" value="UniProtKB-UniRule"/>
</dbReference>
<dbReference type="GO" id="GO:0008360">
    <property type="term" value="P:regulation of cell shape"/>
    <property type="evidence" value="ECO:0007669"/>
    <property type="project" value="UniProtKB-KW"/>
</dbReference>
<dbReference type="Gene3D" id="3.40.50.20">
    <property type="match status" value="1"/>
</dbReference>
<dbReference type="Gene3D" id="3.30.1490.20">
    <property type="entry name" value="ATP-grasp fold, A domain"/>
    <property type="match status" value="1"/>
</dbReference>
<dbReference type="Gene3D" id="3.30.470.20">
    <property type="entry name" value="ATP-grasp fold, B domain"/>
    <property type="match status" value="1"/>
</dbReference>
<dbReference type="HAMAP" id="MF_00047">
    <property type="entry name" value="Dala_Dala_lig"/>
    <property type="match status" value="1"/>
</dbReference>
<dbReference type="InterPro" id="IPR011761">
    <property type="entry name" value="ATP-grasp"/>
</dbReference>
<dbReference type="InterPro" id="IPR013815">
    <property type="entry name" value="ATP_grasp_subdomain_1"/>
</dbReference>
<dbReference type="InterPro" id="IPR000291">
    <property type="entry name" value="D-Ala_lig_Van_CS"/>
</dbReference>
<dbReference type="InterPro" id="IPR005905">
    <property type="entry name" value="D_ala_D_ala"/>
</dbReference>
<dbReference type="InterPro" id="IPR011095">
    <property type="entry name" value="Dala_Dala_lig_C"/>
</dbReference>
<dbReference type="InterPro" id="IPR011127">
    <property type="entry name" value="Dala_Dala_lig_N"/>
</dbReference>
<dbReference type="InterPro" id="IPR016185">
    <property type="entry name" value="PreATP-grasp_dom_sf"/>
</dbReference>
<dbReference type="NCBIfam" id="TIGR01205">
    <property type="entry name" value="D_ala_D_alaTIGR"/>
    <property type="match status" value="1"/>
</dbReference>
<dbReference type="NCBIfam" id="NF002527">
    <property type="entry name" value="PRK01966.1-3"/>
    <property type="match status" value="1"/>
</dbReference>
<dbReference type="PANTHER" id="PTHR23132">
    <property type="entry name" value="D-ALANINE--D-ALANINE LIGASE"/>
    <property type="match status" value="1"/>
</dbReference>
<dbReference type="PANTHER" id="PTHR23132:SF25">
    <property type="entry name" value="D-ALANINE--D-ALANINE LIGASE A"/>
    <property type="match status" value="1"/>
</dbReference>
<dbReference type="Pfam" id="PF07478">
    <property type="entry name" value="Dala_Dala_lig_C"/>
    <property type="match status" value="1"/>
</dbReference>
<dbReference type="Pfam" id="PF01820">
    <property type="entry name" value="Dala_Dala_lig_N"/>
    <property type="match status" value="1"/>
</dbReference>
<dbReference type="PIRSF" id="PIRSF039102">
    <property type="entry name" value="Ddl/VanB"/>
    <property type="match status" value="1"/>
</dbReference>
<dbReference type="SUPFAM" id="SSF56059">
    <property type="entry name" value="Glutathione synthetase ATP-binding domain-like"/>
    <property type="match status" value="1"/>
</dbReference>
<dbReference type="SUPFAM" id="SSF52440">
    <property type="entry name" value="PreATP-grasp domain"/>
    <property type="match status" value="1"/>
</dbReference>
<dbReference type="PROSITE" id="PS50975">
    <property type="entry name" value="ATP_GRASP"/>
    <property type="match status" value="1"/>
</dbReference>
<dbReference type="PROSITE" id="PS00843">
    <property type="entry name" value="DALA_DALA_LIGASE_1"/>
    <property type="match status" value="1"/>
</dbReference>
<dbReference type="PROSITE" id="PS00844">
    <property type="entry name" value="DALA_DALA_LIGASE_2"/>
    <property type="match status" value="1"/>
</dbReference>
<feature type="chain" id="PRO_1000030422" description="D-alanine--D-alanine ligase">
    <location>
        <begin position="1"/>
        <end position="329"/>
    </location>
</feature>
<feature type="domain" description="ATP-grasp" evidence="2">
    <location>
        <begin position="120"/>
        <end position="326"/>
    </location>
</feature>
<feature type="binding site" evidence="2">
    <location>
        <begin position="150"/>
        <end position="205"/>
    </location>
    <ligand>
        <name>ATP</name>
        <dbReference type="ChEBI" id="CHEBI:30616"/>
    </ligand>
</feature>
<feature type="binding site" evidence="2">
    <location>
        <position position="280"/>
    </location>
    <ligand>
        <name>Mg(2+)</name>
        <dbReference type="ChEBI" id="CHEBI:18420"/>
        <label>1</label>
    </ligand>
</feature>
<feature type="binding site" evidence="2">
    <location>
        <position position="293"/>
    </location>
    <ligand>
        <name>Mg(2+)</name>
        <dbReference type="ChEBI" id="CHEBI:18420"/>
        <label>1</label>
    </ligand>
</feature>
<feature type="binding site" evidence="2">
    <location>
        <position position="293"/>
    </location>
    <ligand>
        <name>Mg(2+)</name>
        <dbReference type="ChEBI" id="CHEBI:18420"/>
        <label>2</label>
    </ligand>
</feature>
<feature type="binding site" evidence="2">
    <location>
        <position position="295"/>
    </location>
    <ligand>
        <name>Mg(2+)</name>
        <dbReference type="ChEBI" id="CHEBI:18420"/>
        <label>2</label>
    </ligand>
</feature>
<feature type="strand" evidence="3">
    <location>
        <begin position="6"/>
        <end position="9"/>
    </location>
</feature>
<feature type="helix" evidence="3">
    <location>
        <begin position="17"/>
        <end position="31"/>
    </location>
</feature>
<feature type="strand" evidence="3">
    <location>
        <begin position="34"/>
        <end position="36"/>
    </location>
</feature>
<feature type="strand" evidence="3">
    <location>
        <begin position="39"/>
        <end position="43"/>
    </location>
</feature>
<feature type="strand" evidence="3">
    <location>
        <begin position="49"/>
        <end position="54"/>
    </location>
</feature>
<feature type="strand" evidence="3">
    <location>
        <begin position="57"/>
        <end position="59"/>
    </location>
</feature>
<feature type="strand" evidence="3">
    <location>
        <begin position="63"/>
        <end position="67"/>
    </location>
</feature>
<feature type="strand" evidence="3">
    <location>
        <begin position="70"/>
        <end position="73"/>
    </location>
</feature>
<feature type="strand" evidence="3">
    <location>
        <begin position="75"/>
        <end position="79"/>
    </location>
</feature>
<feature type="turn" evidence="3">
    <location>
        <begin position="84"/>
        <end position="88"/>
    </location>
</feature>
<feature type="helix" evidence="3">
    <location>
        <begin position="90"/>
        <end position="96"/>
    </location>
</feature>
<feature type="helix" evidence="3">
    <location>
        <begin position="97"/>
        <end position="99"/>
    </location>
</feature>
<feature type="strand" evidence="3">
    <location>
        <begin position="102"/>
        <end position="104"/>
    </location>
</feature>
<feature type="helix" evidence="3">
    <location>
        <begin position="107"/>
        <end position="114"/>
    </location>
</feature>
<feature type="helix" evidence="3">
    <location>
        <begin position="116"/>
        <end position="125"/>
    </location>
</feature>
<feature type="strand" evidence="3">
    <location>
        <begin position="141"/>
        <end position="144"/>
    </location>
</feature>
<feature type="turn" evidence="3">
    <location>
        <begin position="147"/>
        <end position="153"/>
    </location>
</feature>
<feature type="strand" evidence="3">
    <location>
        <begin position="154"/>
        <end position="156"/>
    </location>
</feature>
<feature type="strand" evidence="3">
    <location>
        <begin position="158"/>
        <end position="163"/>
    </location>
</feature>
<feature type="strand" evidence="3">
    <location>
        <begin position="174"/>
        <end position="176"/>
    </location>
</feature>
<feature type="helix" evidence="3">
    <location>
        <begin position="177"/>
        <end position="183"/>
    </location>
</feature>
<feature type="turn" evidence="3">
    <location>
        <begin position="184"/>
        <end position="187"/>
    </location>
</feature>
<feature type="strand" evidence="3">
    <location>
        <begin position="193"/>
        <end position="196"/>
    </location>
</feature>
<feature type="strand" evidence="3">
    <location>
        <begin position="203"/>
        <end position="211"/>
    </location>
</feature>
<feature type="strand" evidence="3">
    <location>
        <begin position="214"/>
        <end position="217"/>
    </location>
</feature>
<feature type="strand" evidence="3">
    <location>
        <begin position="246"/>
        <end position="248"/>
    </location>
</feature>
<feature type="helix" evidence="3">
    <location>
        <begin position="254"/>
        <end position="270"/>
    </location>
</feature>
<feature type="strand" evidence="3">
    <location>
        <begin position="275"/>
        <end position="283"/>
    </location>
</feature>
<feature type="strand" evidence="3">
    <location>
        <begin position="289"/>
        <end position="297"/>
    </location>
</feature>
<feature type="strand" evidence="3">
    <location>
        <begin position="301"/>
        <end position="303"/>
    </location>
</feature>
<feature type="helix" evidence="3">
    <location>
        <begin position="305"/>
        <end position="313"/>
    </location>
</feature>
<feature type="helix" evidence="3">
    <location>
        <begin position="318"/>
        <end position="324"/>
    </location>
</feature>